<protein>
    <recommendedName>
        <fullName evidence="1">GTPase Der</fullName>
    </recommendedName>
    <alternativeName>
        <fullName evidence="1">GTP-binding protein EngA</fullName>
    </alternativeName>
</protein>
<name>DER_CHLTE</name>
<reference key="1">
    <citation type="journal article" date="2002" name="Proc. Natl. Acad. Sci. U.S.A.">
        <title>The complete genome sequence of Chlorobium tepidum TLS, a photosynthetic, anaerobic, green-sulfur bacterium.</title>
        <authorList>
            <person name="Eisen J.A."/>
            <person name="Nelson K.E."/>
            <person name="Paulsen I.T."/>
            <person name="Heidelberg J.F."/>
            <person name="Wu M."/>
            <person name="Dodson R.J."/>
            <person name="DeBoy R.T."/>
            <person name="Gwinn M.L."/>
            <person name="Nelson W.C."/>
            <person name="Haft D.H."/>
            <person name="Hickey E.K."/>
            <person name="Peterson J.D."/>
            <person name="Durkin A.S."/>
            <person name="Kolonay J.F."/>
            <person name="Yang F."/>
            <person name="Holt I.E."/>
            <person name="Umayam L.A."/>
            <person name="Mason T.M."/>
            <person name="Brenner M."/>
            <person name="Shea T.P."/>
            <person name="Parksey D.S."/>
            <person name="Nierman W.C."/>
            <person name="Feldblyum T.V."/>
            <person name="Hansen C.L."/>
            <person name="Craven M.B."/>
            <person name="Radune D."/>
            <person name="Vamathevan J.J."/>
            <person name="Khouri H.M."/>
            <person name="White O."/>
            <person name="Gruber T.M."/>
            <person name="Ketchum K.A."/>
            <person name="Venter J.C."/>
            <person name="Tettelin H."/>
            <person name="Bryant D.A."/>
            <person name="Fraser C.M."/>
        </authorList>
    </citation>
    <scope>NUCLEOTIDE SEQUENCE [LARGE SCALE GENOMIC DNA]</scope>
    <source>
        <strain>ATCC 49652 / DSM 12025 / NBRC 103806 / TLS</strain>
    </source>
</reference>
<comment type="function">
    <text evidence="1">GTPase that plays an essential role in the late steps of ribosome biogenesis.</text>
</comment>
<comment type="subunit">
    <text evidence="1">Associates with the 50S ribosomal subunit.</text>
</comment>
<comment type="similarity">
    <text evidence="1">Belongs to the TRAFAC class TrmE-Era-EngA-EngB-Septin-like GTPase superfamily. EngA (Der) GTPase family.</text>
</comment>
<dbReference type="EMBL" id="AE006470">
    <property type="protein sequence ID" value="AAM73005.1"/>
    <property type="molecule type" value="Genomic_DNA"/>
</dbReference>
<dbReference type="RefSeq" id="NP_662663.1">
    <property type="nucleotide sequence ID" value="NC_002932.3"/>
</dbReference>
<dbReference type="RefSeq" id="WP_010933444.1">
    <property type="nucleotide sequence ID" value="NC_002932.3"/>
</dbReference>
<dbReference type="SMR" id="Q8KBK3"/>
<dbReference type="STRING" id="194439.CT1784"/>
<dbReference type="EnsemblBacteria" id="AAM73005">
    <property type="protein sequence ID" value="AAM73005"/>
    <property type="gene ID" value="CT1784"/>
</dbReference>
<dbReference type="KEGG" id="cte:CT1784"/>
<dbReference type="PATRIC" id="fig|194439.7.peg.1618"/>
<dbReference type="eggNOG" id="COG1160">
    <property type="taxonomic scope" value="Bacteria"/>
</dbReference>
<dbReference type="HOGENOM" id="CLU_016077_6_2_10"/>
<dbReference type="OrthoDB" id="9805918at2"/>
<dbReference type="Proteomes" id="UP000001007">
    <property type="component" value="Chromosome"/>
</dbReference>
<dbReference type="GO" id="GO:0005525">
    <property type="term" value="F:GTP binding"/>
    <property type="evidence" value="ECO:0007669"/>
    <property type="project" value="UniProtKB-UniRule"/>
</dbReference>
<dbReference type="GO" id="GO:0042254">
    <property type="term" value="P:ribosome biogenesis"/>
    <property type="evidence" value="ECO:0007669"/>
    <property type="project" value="UniProtKB-KW"/>
</dbReference>
<dbReference type="CDD" id="cd01894">
    <property type="entry name" value="EngA1"/>
    <property type="match status" value="1"/>
</dbReference>
<dbReference type="CDD" id="cd01895">
    <property type="entry name" value="EngA2"/>
    <property type="match status" value="1"/>
</dbReference>
<dbReference type="FunFam" id="3.30.300.20:FF:000004">
    <property type="entry name" value="GTPase Der"/>
    <property type="match status" value="1"/>
</dbReference>
<dbReference type="FunFam" id="3.40.50.300:FF:000040">
    <property type="entry name" value="GTPase Der"/>
    <property type="match status" value="1"/>
</dbReference>
<dbReference type="Gene3D" id="3.30.300.20">
    <property type="match status" value="1"/>
</dbReference>
<dbReference type="Gene3D" id="3.40.50.300">
    <property type="entry name" value="P-loop containing nucleotide triphosphate hydrolases"/>
    <property type="match status" value="2"/>
</dbReference>
<dbReference type="HAMAP" id="MF_00195">
    <property type="entry name" value="GTPase_Der"/>
    <property type="match status" value="1"/>
</dbReference>
<dbReference type="InterPro" id="IPR031166">
    <property type="entry name" value="G_ENGA"/>
</dbReference>
<dbReference type="InterPro" id="IPR006073">
    <property type="entry name" value="GTP-bd"/>
</dbReference>
<dbReference type="InterPro" id="IPR016484">
    <property type="entry name" value="GTPase_Der"/>
</dbReference>
<dbReference type="InterPro" id="IPR032859">
    <property type="entry name" value="KH_dom-like"/>
</dbReference>
<dbReference type="InterPro" id="IPR015946">
    <property type="entry name" value="KH_dom-like_a/b"/>
</dbReference>
<dbReference type="InterPro" id="IPR027417">
    <property type="entry name" value="P-loop_NTPase"/>
</dbReference>
<dbReference type="InterPro" id="IPR005225">
    <property type="entry name" value="Small_GTP-bd"/>
</dbReference>
<dbReference type="NCBIfam" id="TIGR03594">
    <property type="entry name" value="GTPase_EngA"/>
    <property type="match status" value="1"/>
</dbReference>
<dbReference type="NCBIfam" id="TIGR00231">
    <property type="entry name" value="small_GTP"/>
    <property type="match status" value="2"/>
</dbReference>
<dbReference type="PANTHER" id="PTHR43834">
    <property type="entry name" value="GTPASE DER"/>
    <property type="match status" value="1"/>
</dbReference>
<dbReference type="PANTHER" id="PTHR43834:SF6">
    <property type="entry name" value="GTPASE DER"/>
    <property type="match status" value="1"/>
</dbReference>
<dbReference type="Pfam" id="PF14714">
    <property type="entry name" value="KH_dom-like"/>
    <property type="match status" value="1"/>
</dbReference>
<dbReference type="Pfam" id="PF01926">
    <property type="entry name" value="MMR_HSR1"/>
    <property type="match status" value="2"/>
</dbReference>
<dbReference type="PIRSF" id="PIRSF006485">
    <property type="entry name" value="GTP-binding_EngA"/>
    <property type="match status" value="1"/>
</dbReference>
<dbReference type="PRINTS" id="PR00326">
    <property type="entry name" value="GTP1OBG"/>
</dbReference>
<dbReference type="SUPFAM" id="SSF52540">
    <property type="entry name" value="P-loop containing nucleoside triphosphate hydrolases"/>
    <property type="match status" value="2"/>
</dbReference>
<dbReference type="PROSITE" id="PS51712">
    <property type="entry name" value="G_ENGA"/>
    <property type="match status" value="2"/>
</dbReference>
<proteinExistence type="inferred from homology"/>
<sequence length="437" mass="48977">MKPLIALVGRPNVGKSTLFNRILRQKSAIVDPTPGVTRDRHISPGEWQGKQFLLMDTGGYAPENDTLSKAMLEQTMRAIEDADAVIFIVDARSGLTYLDLDIAKILQKTFKDKKIFFVANKVDNPQVALEAQSLVKSGFTEPYLISARDGAGVADMLEDVLNSLPCPEGEEIEEDDSIKLAVLGRPNVGKSSLVNALLGTERHIVSDVPGTTRDAIDSVLKRNGEEYVLIDTAGLRKRTKIDAGIEFYSSLRTARAIERCDVALVLLDARLGLESQDMKIIHMAIERKKGVLILVNKWDLVEKDSKTSKAFTDNLQNQLGNIGYIPVIFTSALTKKNCYRAIDTAAEIALNRRQKISTSNLNRFLQETLTMRHPATKSGKELKIKYMTQIDSDHPVFAFFCNDPELLENNFRRFLEKRLRESFDFAGIPITMRFLRK</sequence>
<organism>
    <name type="scientific">Chlorobaculum tepidum (strain ATCC 49652 / DSM 12025 / NBRC 103806 / TLS)</name>
    <name type="common">Chlorobium tepidum</name>
    <dbReference type="NCBI Taxonomy" id="194439"/>
    <lineage>
        <taxon>Bacteria</taxon>
        <taxon>Pseudomonadati</taxon>
        <taxon>Chlorobiota</taxon>
        <taxon>Chlorobiia</taxon>
        <taxon>Chlorobiales</taxon>
        <taxon>Chlorobiaceae</taxon>
        <taxon>Chlorobaculum</taxon>
    </lineage>
</organism>
<accession>Q8KBK3</accession>
<keyword id="KW-0342">GTP-binding</keyword>
<keyword id="KW-0547">Nucleotide-binding</keyword>
<keyword id="KW-1185">Reference proteome</keyword>
<keyword id="KW-0677">Repeat</keyword>
<keyword id="KW-0690">Ribosome biogenesis</keyword>
<feature type="chain" id="PRO_0000178981" description="GTPase Der">
    <location>
        <begin position="1"/>
        <end position="437"/>
    </location>
</feature>
<feature type="domain" description="EngA-type G 1">
    <location>
        <begin position="3"/>
        <end position="168"/>
    </location>
</feature>
<feature type="domain" description="EngA-type G 2">
    <location>
        <begin position="178"/>
        <end position="353"/>
    </location>
</feature>
<feature type="domain" description="KH-like" evidence="1">
    <location>
        <begin position="354"/>
        <end position="437"/>
    </location>
</feature>
<feature type="binding site" evidence="1">
    <location>
        <begin position="9"/>
        <end position="16"/>
    </location>
    <ligand>
        <name>GTP</name>
        <dbReference type="ChEBI" id="CHEBI:37565"/>
        <label>1</label>
    </ligand>
</feature>
<feature type="binding site" evidence="1">
    <location>
        <begin position="56"/>
        <end position="60"/>
    </location>
    <ligand>
        <name>GTP</name>
        <dbReference type="ChEBI" id="CHEBI:37565"/>
        <label>1</label>
    </ligand>
</feature>
<feature type="binding site" evidence="1">
    <location>
        <begin position="120"/>
        <end position="123"/>
    </location>
    <ligand>
        <name>GTP</name>
        <dbReference type="ChEBI" id="CHEBI:37565"/>
        <label>1</label>
    </ligand>
</feature>
<feature type="binding site" evidence="1">
    <location>
        <begin position="184"/>
        <end position="191"/>
    </location>
    <ligand>
        <name>GTP</name>
        <dbReference type="ChEBI" id="CHEBI:37565"/>
        <label>2</label>
    </ligand>
</feature>
<feature type="binding site" evidence="1">
    <location>
        <begin position="231"/>
        <end position="235"/>
    </location>
    <ligand>
        <name>GTP</name>
        <dbReference type="ChEBI" id="CHEBI:37565"/>
        <label>2</label>
    </ligand>
</feature>
<feature type="binding site" evidence="1">
    <location>
        <begin position="296"/>
        <end position="299"/>
    </location>
    <ligand>
        <name>GTP</name>
        <dbReference type="ChEBI" id="CHEBI:37565"/>
        <label>2</label>
    </ligand>
</feature>
<gene>
    <name evidence="1" type="primary">der</name>
    <name type="synonym">engA</name>
    <name type="ordered locus">CT1784</name>
</gene>
<evidence type="ECO:0000255" key="1">
    <source>
        <dbReference type="HAMAP-Rule" id="MF_00195"/>
    </source>
</evidence>